<organismHost>
    <name type="scientific">Homo sapiens</name>
    <name type="common">Human</name>
    <dbReference type="NCBI Taxonomy" id="9606"/>
</organismHost>
<organismHost>
    <name type="scientific">Mammalia</name>
    <dbReference type="NCBI Taxonomy" id="40674"/>
</organismHost>
<sequence length="524" mass="58365">MVPQVLLFVPLLVFSMCFGKFPIYTIPDKLGPWSPIDIHHLSCPNNLVVEDEGCTNLSGFSYMELKVGYISAIKVNGFTCTGVVTEAETYTNFVGYVTTTFKRKHFRPTPDACRAAYNWKMAGDPRYEESLHNPYPDYHWLRTVKTTKESLVIISPSVADLDPYDKSLHSRVFPSGKCSGITISSTYCSTNHDYTIWMPENPRLGTSCDIFTNSRGKRASKGGKTCGFVDERGLYKSLKGACKLKLCGVLGLRLMDGTWVAMQTSDETKWCPPDQLVNLHDFRSDEIEHLVVEELVKKREECLDALESIMATKSVSFRRLSHLRKLVPGFGKAYTIFNKTLMEADAHYKSVRTWNEIIPSKGCLRVGGRCHPHVNGVFFNGIILGPDGHVLIPEMQSSLLQQHMELLESSVIPLMHPLADPSTVFKDGDEAEDFVEVHLPDVHKQISGVDLGLPSWGKYVLVSAGVLVVLMLTIFIMTCCGRVHRPKSTQHGLGGTGRKVSVTSQSGKVISSWESYKSGGETRL</sequence>
<evidence type="ECO:0000250" key="1"/>
<evidence type="ECO:0000250" key="2">
    <source>
        <dbReference type="UniProtKB" id="P08667"/>
    </source>
</evidence>
<evidence type="ECO:0000255" key="3"/>
<evidence type="ECO:0000305" key="4"/>
<protein>
    <recommendedName>
        <fullName>Glycoprotein</fullName>
    </recommendedName>
</protein>
<comment type="function">
    <text evidence="1 2">Attaches the virus to host cellular receptor, inducing endocytosis of the virion by using different host proteins including TFRC, GRM2 and ITGB1 (By similarity). In the endosome, the acidic pH induces conformational changes in the glycoprotein trimer, which trigger fusion between virus and cell membrane. There is convincing in vitro evidence that the muscular form of the nicotinic acetylcholine receptor (nAChR), the neuronal cell adhesion molecule (NCAM), and the p75 neurotrophin receptor (p75NTR) bind glycoprotein and thereby facilitate rabies virus entry into cells (By similarity).</text>
</comment>
<comment type="subunit">
    <text evidence="1 2">Homotrimer (By similarity). Interacts with matrix protein (By similarity). Interacts with host TRFC. Interacts with host BST2; this interaction inhibits viral budding by tethering new virions to the cell surface. Interacts with ITGB1. Interacts with host GRM2 (By similarity).</text>
</comment>
<comment type="subcellular location">
    <subcellularLocation>
        <location evidence="4">Virion membrane</location>
        <topology evidence="4">Single-pass type I membrane protein</topology>
    </subcellularLocation>
</comment>
<comment type="PTM">
    <text evidence="1">Glycosylated and palmitoylated by host. Glycosylation is crucial for glycoprotein export at the cell surface (By similarity).</text>
</comment>
<comment type="biotechnology">
    <text>Primary surface antigen capable of inducing and reacting with virus-neutralizing antibodies. Almost all human and veterinary vaccines are based on the functional aspects of the G protein.</text>
</comment>
<comment type="miscellaneous">
    <text evidence="1">Arg-352 is highly involved in rabies virus pathogenicity. Its mutation dramatically attenuates the virus (By similarity).</text>
</comment>
<comment type="similarity">
    <text evidence="4">Belongs to the lyssavirus glycoprotein family.</text>
</comment>
<dbReference type="EMBL" id="AY956319">
    <property type="protein sequence ID" value="AAX56084.1"/>
    <property type="molecule type" value="Genomic_RNA"/>
</dbReference>
<dbReference type="EMBL" id="EF437215">
    <property type="protein sequence ID" value="ABO15579.1"/>
    <property type="molecule type" value="Genomic_RNA"/>
</dbReference>
<dbReference type="SMR" id="A3RM22"/>
<dbReference type="GlyCosmos" id="A3RM22">
    <property type="glycosylation" value="2 sites, No reported glycans"/>
</dbReference>
<dbReference type="Proteomes" id="UP000008620">
    <property type="component" value="Genome"/>
</dbReference>
<dbReference type="Proteomes" id="UP000008996">
    <property type="component" value="Genome"/>
</dbReference>
<dbReference type="GO" id="GO:0016020">
    <property type="term" value="C:membrane"/>
    <property type="evidence" value="ECO:0007669"/>
    <property type="project" value="UniProtKB-KW"/>
</dbReference>
<dbReference type="GO" id="GO:0019031">
    <property type="term" value="C:viral envelope"/>
    <property type="evidence" value="ECO:0007669"/>
    <property type="project" value="UniProtKB-KW"/>
</dbReference>
<dbReference type="GO" id="GO:0036338">
    <property type="term" value="C:viral membrane"/>
    <property type="evidence" value="ECO:0000250"/>
    <property type="project" value="UniProtKB"/>
</dbReference>
<dbReference type="GO" id="GO:0055036">
    <property type="term" value="C:virion membrane"/>
    <property type="evidence" value="ECO:0007669"/>
    <property type="project" value="UniProtKB-SubCell"/>
</dbReference>
<dbReference type="GO" id="GO:0098670">
    <property type="term" value="P:entry receptor-mediated virion attachment to host cell"/>
    <property type="evidence" value="ECO:0000250"/>
    <property type="project" value="UniProtKB"/>
</dbReference>
<dbReference type="GO" id="GO:0039654">
    <property type="term" value="P:fusion of virus membrane with host endosome membrane"/>
    <property type="evidence" value="ECO:0000250"/>
    <property type="project" value="UniProtKB"/>
</dbReference>
<dbReference type="Gene3D" id="2.30.29.130">
    <property type="match status" value="1"/>
</dbReference>
<dbReference type="InterPro" id="IPR055448">
    <property type="entry name" value="PH_Rhabdo_glycop"/>
</dbReference>
<dbReference type="InterPro" id="IPR055447">
    <property type="entry name" value="Rhabdo_glycop_CD"/>
</dbReference>
<dbReference type="InterPro" id="IPR001903">
    <property type="entry name" value="Rhabdo_glycop_FD"/>
</dbReference>
<dbReference type="Pfam" id="PF24834">
    <property type="entry name" value="PH_Rhabdo_glycop"/>
    <property type="match status" value="1"/>
</dbReference>
<dbReference type="Pfam" id="PF24833">
    <property type="entry name" value="Rhabdo_glycop_CD"/>
    <property type="match status" value="1"/>
</dbReference>
<dbReference type="Pfam" id="PF00974">
    <property type="entry name" value="Rhabdo_glycop_FD"/>
    <property type="match status" value="1"/>
</dbReference>
<dbReference type="SUPFAM" id="SSF161008">
    <property type="entry name" value="Viral glycoprotein ectodomain-like"/>
    <property type="match status" value="1"/>
</dbReference>
<feature type="signal peptide" evidence="3">
    <location>
        <begin position="1"/>
        <end position="19"/>
    </location>
</feature>
<feature type="chain" id="PRO_0000295801" description="Glycoprotein">
    <location>
        <begin position="20"/>
        <end position="524"/>
    </location>
</feature>
<feature type="topological domain" description="Virion surface" evidence="3">
    <location>
        <begin position="20"/>
        <end position="459"/>
    </location>
</feature>
<feature type="transmembrane region" description="Helical" evidence="3">
    <location>
        <begin position="460"/>
        <end position="480"/>
    </location>
</feature>
<feature type="topological domain" description="Intravirion" evidence="3">
    <location>
        <begin position="481"/>
        <end position="524"/>
    </location>
</feature>
<feature type="lipid moiety-binding region" description="S-palmitoyl cysteine; by host" evidence="1">
    <location>
        <position position="480"/>
    </location>
</feature>
<feature type="glycosylation site" description="N-linked (GlcNAc...) asparagine; by host" evidence="1">
    <location>
        <position position="56"/>
    </location>
</feature>
<feature type="glycosylation site" description="N-linked (GlcNAc...) asparagine; by host" evidence="1">
    <location>
        <position position="338"/>
    </location>
</feature>
<feature type="disulfide bond" evidence="2">
    <location>
        <begin position="43"/>
        <end position="302"/>
    </location>
</feature>
<feature type="disulfide bond" evidence="2">
    <location>
        <begin position="54"/>
        <end position="226"/>
    </location>
</feature>
<feature type="disulfide bond" evidence="2">
    <location>
        <begin position="80"/>
        <end position="113"/>
    </location>
</feature>
<feature type="disulfide bond" evidence="2">
    <location>
        <begin position="178"/>
        <end position="188"/>
    </location>
</feature>
<feature type="disulfide bond" evidence="2">
    <location>
        <begin position="208"/>
        <end position="247"/>
    </location>
</feature>
<feature type="disulfide bond" evidence="2">
    <location>
        <begin position="242"/>
        <end position="271"/>
    </location>
</feature>
<feature type="disulfide bond" evidence="2">
    <location>
        <begin position="363"/>
        <end position="370"/>
    </location>
</feature>
<feature type="sequence variant" description="In strain: Isolate Germany.">
    <original>V</original>
    <variation>A</variation>
    <location>
        <position position="5"/>
    </location>
</feature>
<feature type="sequence variant" description="In strain: Isolate Germany.">
    <original>F</original>
    <variation>V</variation>
    <location>
        <position position="14"/>
    </location>
</feature>
<feature type="sequence variant" description="In strain: Isolate Germany.">
    <original>I</original>
    <variation>V</variation>
    <location>
        <position position="26"/>
    </location>
</feature>
<feature type="sequence variant" description="In strain: Isolate Germany.">
    <original>A</original>
    <variation>T</variation>
    <location>
        <position position="311"/>
    </location>
</feature>
<feature type="sequence variant" description="In strain: Isolate Germany.">
    <original>I</original>
    <variation>V</variation>
    <location>
        <position position="446"/>
    </location>
</feature>
<feature type="sequence variant" description="In strain: Isolate Germany.">
    <original>G</original>
    <variation>R</variation>
    <location>
        <position position="481"/>
    </location>
</feature>
<gene>
    <name type="primary">G</name>
</gene>
<proteinExistence type="evidence at protein level"/>
<accession>A3RM22</accession>
<accession>Q58FH1</accession>
<keyword id="KW-1015">Disulfide bond</keyword>
<keyword id="KW-0325">Glycoprotein</keyword>
<keyword id="KW-0449">Lipoprotein</keyword>
<keyword id="KW-0472">Membrane</keyword>
<keyword id="KW-0564">Palmitate</keyword>
<keyword id="KW-0732">Signal</keyword>
<keyword id="KW-0812">Transmembrane</keyword>
<keyword id="KW-1133">Transmembrane helix</keyword>
<keyword id="KW-0261">Viral envelope protein</keyword>
<keyword id="KW-0946">Virion</keyword>
<name>GLYCO_RABVI</name>
<reference key="1">
    <citation type="submission" date="2005-03" db="EMBL/GenBank/DDBJ databases">
        <title>Virological characterization of cases of transplantation-associated Rabies in Germany.</title>
        <authorList>
            <person name="Pfefferle S."/>
            <person name="Panning M."/>
            <person name="Drosten C."/>
        </authorList>
    </citation>
    <scope>NUCLEOTIDE SEQUENCE [GENOMIC RNA]</scope>
    <source>
        <strain>Isolate Germany</strain>
    </source>
</reference>
<reference key="2">
    <citation type="submission" date="2007-02" db="EMBL/GenBank/DDBJ databases">
        <title>Complete nucleotide sequencing of an Indian isolate of Rabies virus.</title>
        <authorList>
            <person name="Desai A."/>
            <person name="Nagaraja T."/>
            <person name="Muhamuda K."/>
            <person name="Madhusudana S."/>
            <person name="Ravi V."/>
        </authorList>
    </citation>
    <scope>NUCLEOTIDE SEQUENCE [GENOMIC RNA]</scope>
</reference>
<organism>
    <name type="scientific">Rabies virus (strain India)</name>
    <name type="common">RABV</name>
    <dbReference type="NCBI Taxonomy" id="445790"/>
    <lineage>
        <taxon>Viruses</taxon>
        <taxon>Riboviria</taxon>
        <taxon>Orthornavirae</taxon>
        <taxon>Negarnaviricota</taxon>
        <taxon>Haploviricotina</taxon>
        <taxon>Monjiviricetes</taxon>
        <taxon>Mononegavirales</taxon>
        <taxon>Rhabdoviridae</taxon>
        <taxon>Alpharhabdovirinae</taxon>
        <taxon>Lyssavirus</taxon>
        <taxon>Lyssavirus rabies</taxon>
    </lineage>
</organism>